<dbReference type="EC" id="4.1.2.4" evidence="1"/>
<dbReference type="EMBL" id="CP000033">
    <property type="protein sequence ID" value="AAV42282.1"/>
    <property type="molecule type" value="Genomic_DNA"/>
</dbReference>
<dbReference type="RefSeq" id="WP_011254138.1">
    <property type="nucleotide sequence ID" value="NC_006814.3"/>
</dbReference>
<dbReference type="RefSeq" id="YP_193313.1">
    <property type="nucleotide sequence ID" value="NC_006814.3"/>
</dbReference>
<dbReference type="SMR" id="Q5FLZ2"/>
<dbReference type="STRING" id="272621.LBA0391"/>
<dbReference type="GeneID" id="93290509"/>
<dbReference type="KEGG" id="lac:LBA0391"/>
<dbReference type="PATRIC" id="fig|272621.13.peg.377"/>
<dbReference type="eggNOG" id="COG0274">
    <property type="taxonomic scope" value="Bacteria"/>
</dbReference>
<dbReference type="HOGENOM" id="CLU_053595_0_2_9"/>
<dbReference type="OrthoDB" id="9778711at2"/>
<dbReference type="BioCyc" id="LACI272621:G1G49-385-MONOMER"/>
<dbReference type="UniPathway" id="UPA00002">
    <property type="reaction ID" value="UER00468"/>
</dbReference>
<dbReference type="Proteomes" id="UP000006381">
    <property type="component" value="Chromosome"/>
</dbReference>
<dbReference type="GO" id="GO:0005737">
    <property type="term" value="C:cytoplasm"/>
    <property type="evidence" value="ECO:0007669"/>
    <property type="project" value="UniProtKB-SubCell"/>
</dbReference>
<dbReference type="GO" id="GO:0004139">
    <property type="term" value="F:deoxyribose-phosphate aldolase activity"/>
    <property type="evidence" value="ECO:0007669"/>
    <property type="project" value="UniProtKB-UniRule"/>
</dbReference>
<dbReference type="GO" id="GO:0006018">
    <property type="term" value="P:2-deoxyribose 1-phosphate catabolic process"/>
    <property type="evidence" value="ECO:0007669"/>
    <property type="project" value="UniProtKB-UniRule"/>
</dbReference>
<dbReference type="GO" id="GO:0016052">
    <property type="term" value="P:carbohydrate catabolic process"/>
    <property type="evidence" value="ECO:0007669"/>
    <property type="project" value="TreeGrafter"/>
</dbReference>
<dbReference type="GO" id="GO:0009264">
    <property type="term" value="P:deoxyribonucleotide catabolic process"/>
    <property type="evidence" value="ECO:0007669"/>
    <property type="project" value="InterPro"/>
</dbReference>
<dbReference type="CDD" id="cd00959">
    <property type="entry name" value="DeoC"/>
    <property type="match status" value="1"/>
</dbReference>
<dbReference type="FunFam" id="3.20.20.70:FF:000044">
    <property type="entry name" value="Deoxyribose-phosphate aldolase"/>
    <property type="match status" value="1"/>
</dbReference>
<dbReference type="Gene3D" id="3.20.20.70">
    <property type="entry name" value="Aldolase class I"/>
    <property type="match status" value="1"/>
</dbReference>
<dbReference type="HAMAP" id="MF_00114">
    <property type="entry name" value="DeoC_type1"/>
    <property type="match status" value="1"/>
</dbReference>
<dbReference type="InterPro" id="IPR013785">
    <property type="entry name" value="Aldolase_TIM"/>
</dbReference>
<dbReference type="InterPro" id="IPR011343">
    <property type="entry name" value="DeoC"/>
</dbReference>
<dbReference type="InterPro" id="IPR002915">
    <property type="entry name" value="DeoC/FbaB/LacD_aldolase"/>
</dbReference>
<dbReference type="InterPro" id="IPR028581">
    <property type="entry name" value="DeoC_typeI"/>
</dbReference>
<dbReference type="NCBIfam" id="TIGR00126">
    <property type="entry name" value="deoC"/>
    <property type="match status" value="1"/>
</dbReference>
<dbReference type="PANTHER" id="PTHR10889">
    <property type="entry name" value="DEOXYRIBOSE-PHOSPHATE ALDOLASE"/>
    <property type="match status" value="1"/>
</dbReference>
<dbReference type="PANTHER" id="PTHR10889:SF1">
    <property type="entry name" value="DEOXYRIBOSE-PHOSPHATE ALDOLASE"/>
    <property type="match status" value="1"/>
</dbReference>
<dbReference type="Pfam" id="PF01791">
    <property type="entry name" value="DeoC"/>
    <property type="match status" value="1"/>
</dbReference>
<dbReference type="PIRSF" id="PIRSF001357">
    <property type="entry name" value="DeoC"/>
    <property type="match status" value="1"/>
</dbReference>
<dbReference type="SMART" id="SM01133">
    <property type="entry name" value="DeoC"/>
    <property type="match status" value="1"/>
</dbReference>
<dbReference type="SUPFAM" id="SSF51569">
    <property type="entry name" value="Aldolase"/>
    <property type="match status" value="1"/>
</dbReference>
<feature type="chain" id="PRO_0000231543" description="Deoxyribose-phosphate aldolase">
    <location>
        <begin position="1"/>
        <end position="237"/>
    </location>
</feature>
<feature type="active site" description="Proton donor/acceptor" evidence="1">
    <location>
        <position position="94"/>
    </location>
</feature>
<feature type="active site" description="Schiff-base intermediate with acetaldehyde" evidence="1">
    <location>
        <position position="158"/>
    </location>
</feature>
<feature type="active site" description="Proton donor/acceptor" evidence="1">
    <location>
        <position position="187"/>
    </location>
</feature>
<proteinExistence type="inferred from homology"/>
<name>DEOC_LACAC</name>
<keyword id="KW-0963">Cytoplasm</keyword>
<keyword id="KW-0456">Lyase</keyword>
<keyword id="KW-1185">Reference proteome</keyword>
<keyword id="KW-0704">Schiff base</keyword>
<reference key="1">
    <citation type="journal article" date="2005" name="Proc. Natl. Acad. Sci. U.S.A.">
        <title>Complete genome sequence of the probiotic lactic acid bacterium Lactobacillus acidophilus NCFM.</title>
        <authorList>
            <person name="Altermann E."/>
            <person name="Russell W.M."/>
            <person name="Azcarate-Peril M.A."/>
            <person name="Barrangou R."/>
            <person name="Buck B.L."/>
            <person name="McAuliffe O."/>
            <person name="Souther N."/>
            <person name="Dobson A."/>
            <person name="Duong T."/>
            <person name="Callanan M."/>
            <person name="Lick S."/>
            <person name="Hamrick A."/>
            <person name="Cano R."/>
            <person name="Klaenhammer T.R."/>
        </authorList>
    </citation>
    <scope>NUCLEOTIDE SEQUENCE [LARGE SCALE GENOMIC DNA]</scope>
    <source>
        <strain>ATCC 700396 / NCK56 / N2 / NCFM</strain>
    </source>
</reference>
<evidence type="ECO:0000255" key="1">
    <source>
        <dbReference type="HAMAP-Rule" id="MF_00114"/>
    </source>
</evidence>
<comment type="function">
    <text evidence="1">Catalyzes a reversible aldol reaction between acetaldehyde and D-glyceraldehyde 3-phosphate to generate 2-deoxy-D-ribose 5-phosphate.</text>
</comment>
<comment type="catalytic activity">
    <reaction evidence="1">
        <text>2-deoxy-D-ribose 5-phosphate = D-glyceraldehyde 3-phosphate + acetaldehyde</text>
        <dbReference type="Rhea" id="RHEA:12821"/>
        <dbReference type="ChEBI" id="CHEBI:15343"/>
        <dbReference type="ChEBI" id="CHEBI:59776"/>
        <dbReference type="ChEBI" id="CHEBI:62877"/>
        <dbReference type="EC" id="4.1.2.4"/>
    </reaction>
</comment>
<comment type="pathway">
    <text evidence="1">Carbohydrate degradation; 2-deoxy-D-ribose 1-phosphate degradation; D-glyceraldehyde 3-phosphate and acetaldehyde from 2-deoxy-alpha-D-ribose 1-phosphate: step 2/2.</text>
</comment>
<comment type="subcellular location">
    <subcellularLocation>
        <location evidence="1">Cytoplasm</location>
    </subcellularLocation>
</comment>
<comment type="similarity">
    <text evidence="1">Belongs to the DeoC/FbaB aldolase family. DeoC type 1 subfamily.</text>
</comment>
<organism>
    <name type="scientific">Lactobacillus acidophilus (strain ATCC 700396 / NCK56 / N2 / NCFM)</name>
    <dbReference type="NCBI Taxonomy" id="272621"/>
    <lineage>
        <taxon>Bacteria</taxon>
        <taxon>Bacillati</taxon>
        <taxon>Bacillota</taxon>
        <taxon>Bacilli</taxon>
        <taxon>Lactobacillales</taxon>
        <taxon>Lactobacillaceae</taxon>
        <taxon>Lactobacillus</taxon>
    </lineage>
</organism>
<protein>
    <recommendedName>
        <fullName evidence="1">Deoxyribose-phosphate aldolase</fullName>
        <shortName evidence="1">DERA</shortName>
        <ecNumber evidence="1">4.1.2.4</ecNumber>
    </recommendedName>
    <alternativeName>
        <fullName evidence="1">2-deoxy-D-ribose 5-phosphate aldolase</fullName>
    </alternativeName>
    <alternativeName>
        <fullName evidence="1">Phosphodeoxyriboaldolase</fullName>
        <shortName evidence="1">Deoxyriboaldolase</shortName>
    </alternativeName>
</protein>
<accession>Q5FLZ2</accession>
<gene>
    <name evidence="1" type="primary">deoC</name>
    <name type="ordered locus">LBA0391</name>
</gene>
<sequence>MKYTLDDFARLIDHTNLHADATEADMKKLCDEAKKYHFKMVAINQVQSKFCSEQLKGTDIDTGAAIAFPLGQQTIESKVFDTRDAIKNGANEIDYVINITQLKAKDYDYIKQEMQEMVNACHENHVPCKVIFENCYLTKDEIKKLAEIAKEVKPDFIKTSTGFGSSGAKVEDVKLMKSIVGDEVKVKAAGGIRNSDDFLAMVRAGADRIGCSAGVKIYQALKCRMKDDHVDSIEIAR</sequence>